<accession>Q5GRK4</accession>
<dbReference type="EC" id="1.17.7.3" evidence="1"/>
<dbReference type="EMBL" id="AE017321">
    <property type="protein sequence ID" value="AAW71370.1"/>
    <property type="molecule type" value="Genomic_DNA"/>
</dbReference>
<dbReference type="RefSeq" id="WP_011256979.1">
    <property type="nucleotide sequence ID" value="NC_006833.1"/>
</dbReference>
<dbReference type="SMR" id="Q5GRK4"/>
<dbReference type="STRING" id="292805.Wbm0782"/>
<dbReference type="KEGG" id="wbm:Wbm0782"/>
<dbReference type="eggNOG" id="COG0821">
    <property type="taxonomic scope" value="Bacteria"/>
</dbReference>
<dbReference type="HOGENOM" id="CLU_042258_1_0_5"/>
<dbReference type="UniPathway" id="UPA00056">
    <property type="reaction ID" value="UER00096"/>
</dbReference>
<dbReference type="Proteomes" id="UP000000534">
    <property type="component" value="Chromosome"/>
</dbReference>
<dbReference type="GO" id="GO:0051539">
    <property type="term" value="F:4 iron, 4 sulfur cluster binding"/>
    <property type="evidence" value="ECO:0007669"/>
    <property type="project" value="UniProtKB-UniRule"/>
</dbReference>
<dbReference type="GO" id="GO:0046429">
    <property type="term" value="F:4-hydroxy-3-methylbut-2-en-1-yl diphosphate synthase activity (ferredoxin)"/>
    <property type="evidence" value="ECO:0007669"/>
    <property type="project" value="UniProtKB-UniRule"/>
</dbReference>
<dbReference type="GO" id="GO:0141197">
    <property type="term" value="F:4-hydroxy-3-methylbut-2-enyl-diphosphate synthase activity (flavodoxin)"/>
    <property type="evidence" value="ECO:0007669"/>
    <property type="project" value="UniProtKB-EC"/>
</dbReference>
<dbReference type="GO" id="GO:0005506">
    <property type="term" value="F:iron ion binding"/>
    <property type="evidence" value="ECO:0007669"/>
    <property type="project" value="InterPro"/>
</dbReference>
<dbReference type="GO" id="GO:0019288">
    <property type="term" value="P:isopentenyl diphosphate biosynthetic process, methylerythritol 4-phosphate pathway"/>
    <property type="evidence" value="ECO:0007669"/>
    <property type="project" value="UniProtKB-UniRule"/>
</dbReference>
<dbReference type="GO" id="GO:0016114">
    <property type="term" value="P:terpenoid biosynthetic process"/>
    <property type="evidence" value="ECO:0007669"/>
    <property type="project" value="InterPro"/>
</dbReference>
<dbReference type="FunFam" id="3.30.413.10:FF:000012">
    <property type="entry name" value="4-hydroxy-3-methylbut-2-en-1-yl diphosphate synthase (flavodoxin)"/>
    <property type="match status" value="1"/>
</dbReference>
<dbReference type="Gene3D" id="3.20.20.20">
    <property type="entry name" value="Dihydropteroate synthase-like"/>
    <property type="match status" value="1"/>
</dbReference>
<dbReference type="Gene3D" id="3.30.413.10">
    <property type="entry name" value="Sulfite Reductase Hemoprotein, domain 1"/>
    <property type="match status" value="1"/>
</dbReference>
<dbReference type="HAMAP" id="MF_00159">
    <property type="entry name" value="IspG"/>
    <property type="match status" value="1"/>
</dbReference>
<dbReference type="InterPro" id="IPR011005">
    <property type="entry name" value="Dihydropteroate_synth-like_sf"/>
</dbReference>
<dbReference type="InterPro" id="IPR016425">
    <property type="entry name" value="IspG_bac"/>
</dbReference>
<dbReference type="InterPro" id="IPR004588">
    <property type="entry name" value="IspG_bac-typ"/>
</dbReference>
<dbReference type="InterPro" id="IPR045854">
    <property type="entry name" value="NO2/SO3_Rdtase_4Fe4S_sf"/>
</dbReference>
<dbReference type="NCBIfam" id="TIGR00612">
    <property type="entry name" value="ispG_gcpE"/>
    <property type="match status" value="1"/>
</dbReference>
<dbReference type="NCBIfam" id="NF001540">
    <property type="entry name" value="PRK00366.1"/>
    <property type="match status" value="1"/>
</dbReference>
<dbReference type="PANTHER" id="PTHR30454">
    <property type="entry name" value="4-HYDROXY-3-METHYLBUT-2-EN-1-YL DIPHOSPHATE SYNTHASE"/>
    <property type="match status" value="1"/>
</dbReference>
<dbReference type="PANTHER" id="PTHR30454:SF0">
    <property type="entry name" value="4-HYDROXY-3-METHYLBUT-2-EN-1-YL DIPHOSPHATE SYNTHASE (FERREDOXIN), CHLOROPLASTIC"/>
    <property type="match status" value="1"/>
</dbReference>
<dbReference type="Pfam" id="PF04551">
    <property type="entry name" value="GcpE"/>
    <property type="match status" value="1"/>
</dbReference>
<dbReference type="PIRSF" id="PIRSF004640">
    <property type="entry name" value="IspG"/>
    <property type="match status" value="1"/>
</dbReference>
<protein>
    <recommendedName>
        <fullName evidence="1">4-hydroxy-3-methylbut-2-en-1-yl diphosphate synthase (flavodoxin)</fullName>
        <ecNumber evidence="1">1.17.7.3</ecNumber>
    </recommendedName>
    <alternativeName>
        <fullName evidence="1">1-hydroxy-2-methyl-2-(E)-butenyl 4-diphosphate synthase</fullName>
    </alternativeName>
</protein>
<name>ISPG_WOLTR</name>
<organism>
    <name type="scientific">Wolbachia sp. subsp. Brugia malayi (strain TRS)</name>
    <dbReference type="NCBI Taxonomy" id="292805"/>
    <lineage>
        <taxon>Bacteria</taxon>
        <taxon>Pseudomonadati</taxon>
        <taxon>Pseudomonadota</taxon>
        <taxon>Alphaproteobacteria</taxon>
        <taxon>Rickettsiales</taxon>
        <taxon>Anaplasmataceae</taxon>
        <taxon>Wolbachieae</taxon>
        <taxon>Wolbachia</taxon>
    </lineage>
</organism>
<evidence type="ECO:0000255" key="1">
    <source>
        <dbReference type="HAMAP-Rule" id="MF_00159"/>
    </source>
</evidence>
<comment type="function">
    <text evidence="1">Converts 2C-methyl-D-erythritol 2,4-cyclodiphosphate (ME-2,4cPP) into 1-hydroxy-2-methyl-2-(E)-butenyl 4-diphosphate.</text>
</comment>
<comment type="catalytic activity">
    <reaction evidence="1">
        <text>(2E)-4-hydroxy-3-methylbut-2-enyl diphosphate + oxidized [flavodoxin] + H2O + 2 H(+) = 2-C-methyl-D-erythritol 2,4-cyclic diphosphate + reduced [flavodoxin]</text>
        <dbReference type="Rhea" id="RHEA:43604"/>
        <dbReference type="Rhea" id="RHEA-COMP:10622"/>
        <dbReference type="Rhea" id="RHEA-COMP:10623"/>
        <dbReference type="ChEBI" id="CHEBI:15377"/>
        <dbReference type="ChEBI" id="CHEBI:15378"/>
        <dbReference type="ChEBI" id="CHEBI:57618"/>
        <dbReference type="ChEBI" id="CHEBI:58210"/>
        <dbReference type="ChEBI" id="CHEBI:58483"/>
        <dbReference type="ChEBI" id="CHEBI:128753"/>
        <dbReference type="EC" id="1.17.7.3"/>
    </reaction>
</comment>
<comment type="cofactor">
    <cofactor evidence="1">
        <name>[4Fe-4S] cluster</name>
        <dbReference type="ChEBI" id="CHEBI:49883"/>
    </cofactor>
    <text evidence="1">Binds 1 [4Fe-4S] cluster.</text>
</comment>
<comment type="pathway">
    <text evidence="1">Isoprenoid biosynthesis; isopentenyl diphosphate biosynthesis via DXP pathway; isopentenyl diphosphate from 1-deoxy-D-xylulose 5-phosphate: step 5/6.</text>
</comment>
<comment type="similarity">
    <text evidence="1">Belongs to the IspG family.</text>
</comment>
<reference key="1">
    <citation type="journal article" date="2005" name="PLoS Biol.">
        <title>The Wolbachia genome of Brugia malayi: endosymbiont evolution within a human pathogenic nematode.</title>
        <authorList>
            <person name="Foster J."/>
            <person name="Ganatra M."/>
            <person name="Kamal I."/>
            <person name="Ware J."/>
            <person name="Makarova K."/>
            <person name="Ivanova N."/>
            <person name="Bhattacharyya A."/>
            <person name="Kapatral V."/>
            <person name="Kumar S."/>
            <person name="Posfai J."/>
            <person name="Vincze T."/>
            <person name="Ingram J."/>
            <person name="Moran L."/>
            <person name="Lapidus A."/>
            <person name="Omelchenko M."/>
            <person name="Kyrpides N."/>
            <person name="Ghedin E."/>
            <person name="Wang S."/>
            <person name="Goltsman E."/>
            <person name="Joukov V."/>
            <person name="Ostrovskaya O."/>
            <person name="Tsukerman K."/>
            <person name="Mazur M."/>
            <person name="Comb D."/>
            <person name="Koonin E."/>
            <person name="Slatko B."/>
        </authorList>
    </citation>
    <scope>NUCLEOTIDE SEQUENCE [LARGE SCALE GENOMIC DNA]</scope>
    <source>
        <strain>TRS</strain>
    </source>
</reference>
<feature type="chain" id="PRO_0000190659" description="4-hydroxy-3-methylbut-2-en-1-yl diphosphate synthase (flavodoxin)">
    <location>
        <begin position="1"/>
        <end position="429"/>
    </location>
</feature>
<feature type="binding site" evidence="1">
    <location>
        <position position="323"/>
    </location>
    <ligand>
        <name>[4Fe-4S] cluster</name>
        <dbReference type="ChEBI" id="CHEBI:49883"/>
    </ligand>
</feature>
<feature type="binding site" evidence="1">
    <location>
        <position position="326"/>
    </location>
    <ligand>
        <name>[4Fe-4S] cluster</name>
        <dbReference type="ChEBI" id="CHEBI:49883"/>
    </ligand>
</feature>
<feature type="binding site" evidence="1">
    <location>
        <position position="369"/>
    </location>
    <ligand>
        <name>[4Fe-4S] cluster</name>
        <dbReference type="ChEBI" id="CHEBI:49883"/>
    </ligand>
</feature>
<feature type="binding site" evidence="1">
    <location>
        <position position="376"/>
    </location>
    <ligand>
        <name>[4Fe-4S] cluster</name>
        <dbReference type="ChEBI" id="CHEBI:49883"/>
    </ligand>
</feature>
<gene>
    <name evidence="1" type="primary">ispG</name>
    <name type="ordered locus">Wbm0782</name>
</gene>
<sequence length="429" mass="47381">MLNKDLVDHDLSDEVCELLPASRHKTYVVKVGQVKIGGNNPIVVQSMALGVHIDSDNVKSSAKRYAKEIIELAHAGSELVRIALNSEEVARAVPYIVEEINKEGFDGKILVGCGQYELDKLVRNYPDNIKMLGKIRINPGNIGFGDKHDEKFERVIEYAITHDIPVRIGVNWGSLDKYLLQKLMDENSLSNNPKSSDVILRKALVMSALNSAQKAEEIGLSLDKIVISCKVSRVQDLISVYTALAKSSNYALHLGLTEAGTGNKGMISTTAGLTYLLQNGIGDTIRASLTQRPGEPRVNEVAVCQEILQSIGLRHFNPQVNSCPGCGRTNSDRFRILTEEVNDYIKIRMPTWKKKNPGVEHMNIAVMGCIVNGPGESKHANLGISLPGYGEKPISAVYKDGKYFKTLQGDNIFEEFKAIIDDYVKEHYT</sequence>
<proteinExistence type="inferred from homology"/>
<keyword id="KW-0004">4Fe-4S</keyword>
<keyword id="KW-0408">Iron</keyword>
<keyword id="KW-0411">Iron-sulfur</keyword>
<keyword id="KW-0414">Isoprene biosynthesis</keyword>
<keyword id="KW-0479">Metal-binding</keyword>
<keyword id="KW-0560">Oxidoreductase</keyword>
<keyword id="KW-1185">Reference proteome</keyword>